<feature type="chain" id="PRO_0000279490" description="MORN repeat-containing protein 4">
    <location>
        <begin position="1"/>
        <end position="146"/>
    </location>
</feature>
<feature type="repeat" description="MORN 1">
    <location>
        <begin position="16"/>
        <end position="38"/>
    </location>
</feature>
<feature type="repeat" description="MORN 2">
    <location>
        <begin position="39"/>
        <end position="61"/>
    </location>
</feature>
<feature type="repeat" description="MORN 3">
    <location>
        <begin position="62"/>
        <end position="84"/>
    </location>
</feature>
<feature type="repeat" description="MORN 4">
    <location>
        <begin position="85"/>
        <end position="107"/>
    </location>
</feature>
<name>MORN4_PONAB</name>
<organism>
    <name type="scientific">Pongo abelii</name>
    <name type="common">Sumatran orangutan</name>
    <name type="synonym">Pongo pygmaeus abelii</name>
    <dbReference type="NCBI Taxonomy" id="9601"/>
    <lineage>
        <taxon>Eukaryota</taxon>
        <taxon>Metazoa</taxon>
        <taxon>Chordata</taxon>
        <taxon>Craniata</taxon>
        <taxon>Vertebrata</taxon>
        <taxon>Euteleostomi</taxon>
        <taxon>Mammalia</taxon>
        <taxon>Eutheria</taxon>
        <taxon>Euarchontoglires</taxon>
        <taxon>Primates</taxon>
        <taxon>Haplorrhini</taxon>
        <taxon>Catarrhini</taxon>
        <taxon>Hominidae</taxon>
        <taxon>Pongo</taxon>
    </lineage>
</organism>
<evidence type="ECO:0000250" key="1">
    <source>
        <dbReference type="UniProtKB" id="Q6PGF2"/>
    </source>
</evidence>
<evidence type="ECO:0000250" key="2">
    <source>
        <dbReference type="UniProtKB" id="Q8NDC4"/>
    </source>
</evidence>
<comment type="function">
    <text evidence="1">Plays a role in promoting axonal degeneration following neuronal injury by toxic insult or trauma.</text>
</comment>
<comment type="subunit">
    <text evidence="2">Interacts with MYO3A.</text>
</comment>
<comment type="subcellular location">
    <subcellularLocation>
        <location evidence="2">Cytoplasm</location>
    </subcellularLocation>
    <subcellularLocation>
        <location evidence="2">Cell projection</location>
        <location evidence="2">Filopodium tip</location>
    </subcellularLocation>
    <subcellularLocation>
        <location evidence="1">Cell projection</location>
        <location evidence="1">Stereocilium</location>
    </subcellularLocation>
    <text evidence="2">Found in the cytoplasm in the absence of MYO3A and localizes at filopodial tips in the presence of MYO3A.</text>
</comment>
<protein>
    <recommendedName>
        <fullName>MORN repeat-containing protein 4</fullName>
    </recommendedName>
</protein>
<proteinExistence type="evidence at transcript level"/>
<dbReference type="EMBL" id="CR860986">
    <property type="protein sequence ID" value="CAH93088.1"/>
    <property type="molecule type" value="mRNA"/>
</dbReference>
<dbReference type="RefSeq" id="NP_001126828.1">
    <property type="nucleotide sequence ID" value="NM_001133356.1"/>
</dbReference>
<dbReference type="SMR" id="Q5R578"/>
<dbReference type="FunCoup" id="Q5R578">
    <property type="interactions" value="145"/>
</dbReference>
<dbReference type="STRING" id="9601.ENSPPYP00000002945"/>
<dbReference type="Ensembl" id="ENSPPYT00000043703.1">
    <property type="protein sequence ID" value="ENSPPYP00000028389.1"/>
    <property type="gene ID" value="ENSPPYG00000031901.1"/>
</dbReference>
<dbReference type="GeneID" id="100173834"/>
<dbReference type="KEGG" id="pon:100173834"/>
<dbReference type="CTD" id="118812"/>
<dbReference type="eggNOG" id="KOG0231">
    <property type="taxonomic scope" value="Eukaryota"/>
</dbReference>
<dbReference type="GeneTree" id="ENSGT00730000111173"/>
<dbReference type="HOGENOM" id="CLU_113346_0_0_1"/>
<dbReference type="InParanoid" id="Q5R578"/>
<dbReference type="OMA" id="FTRCDGM"/>
<dbReference type="OrthoDB" id="406044at2759"/>
<dbReference type="TreeFam" id="TF323893"/>
<dbReference type="Proteomes" id="UP000001595">
    <property type="component" value="Chromosome 10"/>
</dbReference>
<dbReference type="GO" id="GO:0005737">
    <property type="term" value="C:cytoplasm"/>
    <property type="evidence" value="ECO:0000250"/>
    <property type="project" value="UniProtKB"/>
</dbReference>
<dbReference type="GO" id="GO:0032433">
    <property type="term" value="C:filopodium tip"/>
    <property type="evidence" value="ECO:0000250"/>
    <property type="project" value="UniProtKB"/>
</dbReference>
<dbReference type="GO" id="GO:0032426">
    <property type="term" value="C:stereocilium tip"/>
    <property type="evidence" value="ECO:0000250"/>
    <property type="project" value="UniProtKB"/>
</dbReference>
<dbReference type="GO" id="GO:0048678">
    <property type="term" value="P:response to axon injury"/>
    <property type="evidence" value="ECO:0000250"/>
    <property type="project" value="UniProtKB"/>
</dbReference>
<dbReference type="FunFam" id="2.20.110.10:FF:000011">
    <property type="entry name" value="MORN repeat-containing protein 4"/>
    <property type="match status" value="1"/>
</dbReference>
<dbReference type="FunFam" id="2.20.110.10:FF:000014">
    <property type="entry name" value="MORN repeat-containing protein 4"/>
    <property type="match status" value="1"/>
</dbReference>
<dbReference type="Gene3D" id="2.20.110.10">
    <property type="entry name" value="Histone H3 K4-specific methyltransferase SET7/9 N-terminal domain"/>
    <property type="match status" value="2"/>
</dbReference>
<dbReference type="InterPro" id="IPR003409">
    <property type="entry name" value="MORN"/>
</dbReference>
<dbReference type="InterPro" id="IPR052315">
    <property type="entry name" value="MORN4"/>
</dbReference>
<dbReference type="PANTHER" id="PTHR46614">
    <property type="entry name" value="MORN REPEAT-CONTAINING PROTEIN 4"/>
    <property type="match status" value="1"/>
</dbReference>
<dbReference type="PANTHER" id="PTHR46614:SF1">
    <property type="entry name" value="MORN REPEAT-CONTAINING PROTEIN 4"/>
    <property type="match status" value="1"/>
</dbReference>
<dbReference type="Pfam" id="PF02493">
    <property type="entry name" value="MORN"/>
    <property type="match status" value="4"/>
</dbReference>
<dbReference type="SMART" id="SM00698">
    <property type="entry name" value="MORN"/>
    <property type="match status" value="4"/>
</dbReference>
<dbReference type="SUPFAM" id="SSF82185">
    <property type="entry name" value="Histone H3 K4-specific methyltransferase SET7/9 N-terminal domain"/>
    <property type="match status" value="1"/>
</dbReference>
<sequence length="146" mass="16236">MTLTKGSFTYSSGEEYRGEWKEGRRHGFGQLMFADGGTYLGHFENGLFNGFGVLTFSDGSRYEGEFAQGKFNGVGVFIRYDNMTFEGEFKNGRVDGFGLLTFPDGSHGIPRNEGLFENNKLLRREKCSAIVQRAQSASKSARNLTA</sequence>
<keyword id="KW-0966">Cell projection</keyword>
<keyword id="KW-0963">Cytoplasm</keyword>
<keyword id="KW-1185">Reference proteome</keyword>
<keyword id="KW-0677">Repeat</keyword>
<reference key="1">
    <citation type="submission" date="2004-11" db="EMBL/GenBank/DDBJ databases">
        <authorList>
            <consortium name="The German cDNA consortium"/>
        </authorList>
    </citation>
    <scope>NUCLEOTIDE SEQUENCE [LARGE SCALE MRNA]</scope>
    <source>
        <tissue>Brain cortex</tissue>
    </source>
</reference>
<gene>
    <name type="primary">MORN4</name>
</gene>
<accession>Q5R578</accession>